<protein>
    <recommendedName>
        <fullName evidence="1">Large ribosomal subunit protein bL21</fullName>
    </recommendedName>
    <alternativeName>
        <fullName evidence="2">50S ribosomal protein L21</fullName>
    </alternativeName>
</protein>
<dbReference type="EMBL" id="CP000680">
    <property type="protein sequence ID" value="ABP86430.1"/>
    <property type="molecule type" value="Genomic_DNA"/>
</dbReference>
<dbReference type="SMR" id="A4XYL4"/>
<dbReference type="STRING" id="399739.Pmen_3682"/>
<dbReference type="KEGG" id="pmy:Pmen_3682"/>
<dbReference type="PATRIC" id="fig|399739.8.peg.3734"/>
<dbReference type="eggNOG" id="COG0261">
    <property type="taxonomic scope" value="Bacteria"/>
</dbReference>
<dbReference type="HOGENOM" id="CLU_061463_3_2_6"/>
<dbReference type="OrthoDB" id="9813334at2"/>
<dbReference type="GO" id="GO:0005737">
    <property type="term" value="C:cytoplasm"/>
    <property type="evidence" value="ECO:0007669"/>
    <property type="project" value="UniProtKB-ARBA"/>
</dbReference>
<dbReference type="GO" id="GO:1990904">
    <property type="term" value="C:ribonucleoprotein complex"/>
    <property type="evidence" value="ECO:0007669"/>
    <property type="project" value="UniProtKB-KW"/>
</dbReference>
<dbReference type="GO" id="GO:0005840">
    <property type="term" value="C:ribosome"/>
    <property type="evidence" value="ECO:0007669"/>
    <property type="project" value="UniProtKB-KW"/>
</dbReference>
<dbReference type="GO" id="GO:0019843">
    <property type="term" value="F:rRNA binding"/>
    <property type="evidence" value="ECO:0007669"/>
    <property type="project" value="UniProtKB-UniRule"/>
</dbReference>
<dbReference type="GO" id="GO:0003735">
    <property type="term" value="F:structural constituent of ribosome"/>
    <property type="evidence" value="ECO:0007669"/>
    <property type="project" value="InterPro"/>
</dbReference>
<dbReference type="GO" id="GO:0006412">
    <property type="term" value="P:translation"/>
    <property type="evidence" value="ECO:0007669"/>
    <property type="project" value="UniProtKB-UniRule"/>
</dbReference>
<dbReference type="HAMAP" id="MF_01363">
    <property type="entry name" value="Ribosomal_bL21"/>
    <property type="match status" value="1"/>
</dbReference>
<dbReference type="InterPro" id="IPR028909">
    <property type="entry name" value="bL21-like"/>
</dbReference>
<dbReference type="InterPro" id="IPR036164">
    <property type="entry name" value="bL21-like_sf"/>
</dbReference>
<dbReference type="InterPro" id="IPR001787">
    <property type="entry name" value="Ribosomal_bL21"/>
</dbReference>
<dbReference type="InterPro" id="IPR018258">
    <property type="entry name" value="Ribosomal_bL21_CS"/>
</dbReference>
<dbReference type="NCBIfam" id="TIGR00061">
    <property type="entry name" value="L21"/>
    <property type="match status" value="1"/>
</dbReference>
<dbReference type="PANTHER" id="PTHR21349">
    <property type="entry name" value="50S RIBOSOMAL PROTEIN L21"/>
    <property type="match status" value="1"/>
</dbReference>
<dbReference type="PANTHER" id="PTHR21349:SF0">
    <property type="entry name" value="LARGE RIBOSOMAL SUBUNIT PROTEIN BL21M"/>
    <property type="match status" value="1"/>
</dbReference>
<dbReference type="Pfam" id="PF00829">
    <property type="entry name" value="Ribosomal_L21p"/>
    <property type="match status" value="1"/>
</dbReference>
<dbReference type="SUPFAM" id="SSF141091">
    <property type="entry name" value="L21p-like"/>
    <property type="match status" value="1"/>
</dbReference>
<dbReference type="PROSITE" id="PS01169">
    <property type="entry name" value="RIBOSOMAL_L21"/>
    <property type="match status" value="1"/>
</dbReference>
<sequence>MYAVIVTGGKQYKVTEGEFLKIEKLELATGEAVTFDRVLLIGNGDDVKIGAPVVDGAKVVAEVVSQGRHDKVRIIKFRRRKHHMKRQGHRQWFTEIKITGIQA</sequence>
<gene>
    <name evidence="1" type="primary">rplU</name>
    <name type="ordered locus">Pmen_3682</name>
</gene>
<reference key="1">
    <citation type="submission" date="2007-04" db="EMBL/GenBank/DDBJ databases">
        <title>Complete sequence of Pseudomonas mendocina ymp.</title>
        <authorList>
            <consortium name="US DOE Joint Genome Institute"/>
            <person name="Copeland A."/>
            <person name="Lucas S."/>
            <person name="Lapidus A."/>
            <person name="Barry K."/>
            <person name="Glavina del Rio T."/>
            <person name="Dalin E."/>
            <person name="Tice H."/>
            <person name="Pitluck S."/>
            <person name="Kiss H."/>
            <person name="Brettin T."/>
            <person name="Detter J.C."/>
            <person name="Bruce D."/>
            <person name="Han C."/>
            <person name="Schmutz J."/>
            <person name="Larimer F."/>
            <person name="Land M."/>
            <person name="Hauser L."/>
            <person name="Kyrpides N."/>
            <person name="Mikhailova N."/>
            <person name="Hersman L."/>
            <person name="Dubois J."/>
            <person name="Maurice P."/>
            <person name="Richardson P."/>
        </authorList>
    </citation>
    <scope>NUCLEOTIDE SEQUENCE [LARGE SCALE GENOMIC DNA]</scope>
    <source>
        <strain>ymp</strain>
    </source>
</reference>
<accession>A4XYL4</accession>
<comment type="function">
    <text evidence="1">This protein binds to 23S rRNA in the presence of protein L20.</text>
</comment>
<comment type="subunit">
    <text evidence="1">Part of the 50S ribosomal subunit. Contacts protein L20.</text>
</comment>
<comment type="similarity">
    <text evidence="1">Belongs to the bacterial ribosomal protein bL21 family.</text>
</comment>
<name>RL21_ECTM1</name>
<feature type="chain" id="PRO_1000067879" description="Large ribosomal subunit protein bL21">
    <location>
        <begin position="1"/>
        <end position="103"/>
    </location>
</feature>
<proteinExistence type="inferred from homology"/>
<evidence type="ECO:0000255" key="1">
    <source>
        <dbReference type="HAMAP-Rule" id="MF_01363"/>
    </source>
</evidence>
<evidence type="ECO:0000305" key="2"/>
<keyword id="KW-0687">Ribonucleoprotein</keyword>
<keyword id="KW-0689">Ribosomal protein</keyword>
<keyword id="KW-0694">RNA-binding</keyword>
<keyword id="KW-0699">rRNA-binding</keyword>
<organism>
    <name type="scientific">Ectopseudomonas mendocina (strain ymp)</name>
    <name type="common">Pseudomonas mendocina</name>
    <dbReference type="NCBI Taxonomy" id="399739"/>
    <lineage>
        <taxon>Bacteria</taxon>
        <taxon>Pseudomonadati</taxon>
        <taxon>Pseudomonadota</taxon>
        <taxon>Gammaproteobacteria</taxon>
        <taxon>Pseudomonadales</taxon>
        <taxon>Pseudomonadaceae</taxon>
        <taxon>Ectopseudomonas</taxon>
    </lineage>
</organism>